<accession>Q73BU7</accession>
<dbReference type="EC" id="2.7.1.23" evidence="1"/>
<dbReference type="EMBL" id="AE017194">
    <property type="protein sequence ID" value="AAS40250.1"/>
    <property type="molecule type" value="Genomic_DNA"/>
</dbReference>
<dbReference type="SMR" id="Q73BU7"/>
<dbReference type="KEGG" id="bca:BCE_1321"/>
<dbReference type="HOGENOM" id="CLU_008831_0_3_9"/>
<dbReference type="Proteomes" id="UP000002527">
    <property type="component" value="Chromosome"/>
</dbReference>
<dbReference type="GO" id="GO:0005737">
    <property type="term" value="C:cytoplasm"/>
    <property type="evidence" value="ECO:0007669"/>
    <property type="project" value="UniProtKB-SubCell"/>
</dbReference>
<dbReference type="GO" id="GO:0005524">
    <property type="term" value="F:ATP binding"/>
    <property type="evidence" value="ECO:0007669"/>
    <property type="project" value="UniProtKB-KW"/>
</dbReference>
<dbReference type="GO" id="GO:0046872">
    <property type="term" value="F:metal ion binding"/>
    <property type="evidence" value="ECO:0007669"/>
    <property type="project" value="UniProtKB-UniRule"/>
</dbReference>
<dbReference type="GO" id="GO:0051287">
    <property type="term" value="F:NAD binding"/>
    <property type="evidence" value="ECO:0007669"/>
    <property type="project" value="UniProtKB-ARBA"/>
</dbReference>
<dbReference type="GO" id="GO:0003951">
    <property type="term" value="F:NAD+ kinase activity"/>
    <property type="evidence" value="ECO:0007669"/>
    <property type="project" value="UniProtKB-UniRule"/>
</dbReference>
<dbReference type="GO" id="GO:0019674">
    <property type="term" value="P:NAD metabolic process"/>
    <property type="evidence" value="ECO:0007669"/>
    <property type="project" value="InterPro"/>
</dbReference>
<dbReference type="GO" id="GO:0006741">
    <property type="term" value="P:NADP biosynthetic process"/>
    <property type="evidence" value="ECO:0007669"/>
    <property type="project" value="UniProtKB-UniRule"/>
</dbReference>
<dbReference type="FunFam" id="2.60.200.30:FF:000002">
    <property type="entry name" value="NAD kinase"/>
    <property type="match status" value="1"/>
</dbReference>
<dbReference type="Gene3D" id="3.40.50.10330">
    <property type="entry name" value="Probable inorganic polyphosphate/atp-NAD kinase, domain 1"/>
    <property type="match status" value="1"/>
</dbReference>
<dbReference type="Gene3D" id="2.60.200.30">
    <property type="entry name" value="Probable inorganic polyphosphate/atp-NAD kinase, domain 2"/>
    <property type="match status" value="1"/>
</dbReference>
<dbReference type="HAMAP" id="MF_00361">
    <property type="entry name" value="NAD_kinase"/>
    <property type="match status" value="1"/>
</dbReference>
<dbReference type="InterPro" id="IPR017438">
    <property type="entry name" value="ATP-NAD_kinase_N"/>
</dbReference>
<dbReference type="InterPro" id="IPR017437">
    <property type="entry name" value="ATP-NAD_kinase_PpnK-typ_C"/>
</dbReference>
<dbReference type="InterPro" id="IPR016064">
    <property type="entry name" value="NAD/diacylglycerol_kinase_sf"/>
</dbReference>
<dbReference type="InterPro" id="IPR002504">
    <property type="entry name" value="NADK"/>
</dbReference>
<dbReference type="NCBIfam" id="NF003424">
    <property type="entry name" value="PRK04885.1"/>
    <property type="match status" value="1"/>
</dbReference>
<dbReference type="PANTHER" id="PTHR20275">
    <property type="entry name" value="NAD KINASE"/>
    <property type="match status" value="1"/>
</dbReference>
<dbReference type="PANTHER" id="PTHR20275:SF0">
    <property type="entry name" value="NAD KINASE"/>
    <property type="match status" value="1"/>
</dbReference>
<dbReference type="Pfam" id="PF01513">
    <property type="entry name" value="NAD_kinase"/>
    <property type="match status" value="1"/>
</dbReference>
<dbReference type="Pfam" id="PF20143">
    <property type="entry name" value="NAD_kinase_C"/>
    <property type="match status" value="1"/>
</dbReference>
<dbReference type="SUPFAM" id="SSF111331">
    <property type="entry name" value="NAD kinase/diacylglycerol kinase-like"/>
    <property type="match status" value="1"/>
</dbReference>
<protein>
    <recommendedName>
        <fullName evidence="1">NAD kinase 1</fullName>
        <ecNumber evidence="1">2.7.1.23</ecNumber>
    </recommendedName>
    <alternativeName>
        <fullName evidence="1">ATP-dependent NAD kinase 1</fullName>
    </alternativeName>
</protein>
<comment type="function">
    <text evidence="1">Involved in the regulation of the intracellular balance of NAD and NADP, and is a key enzyme in the biosynthesis of NADP. Catalyzes specifically the phosphorylation on 2'-hydroxyl of the adenosine moiety of NAD to yield NADP.</text>
</comment>
<comment type="catalytic activity">
    <reaction evidence="1">
        <text>NAD(+) + ATP = ADP + NADP(+) + H(+)</text>
        <dbReference type="Rhea" id="RHEA:18629"/>
        <dbReference type="ChEBI" id="CHEBI:15378"/>
        <dbReference type="ChEBI" id="CHEBI:30616"/>
        <dbReference type="ChEBI" id="CHEBI:57540"/>
        <dbReference type="ChEBI" id="CHEBI:58349"/>
        <dbReference type="ChEBI" id="CHEBI:456216"/>
        <dbReference type="EC" id="2.7.1.23"/>
    </reaction>
</comment>
<comment type="cofactor">
    <cofactor evidence="1">
        <name>a divalent metal cation</name>
        <dbReference type="ChEBI" id="CHEBI:60240"/>
    </cofactor>
</comment>
<comment type="subcellular location">
    <subcellularLocation>
        <location evidence="1">Cytoplasm</location>
    </subcellularLocation>
</comment>
<comment type="similarity">
    <text evidence="1">Belongs to the NAD kinase family.</text>
</comment>
<reference key="1">
    <citation type="journal article" date="2004" name="Nucleic Acids Res.">
        <title>The genome sequence of Bacillus cereus ATCC 10987 reveals metabolic adaptations and a large plasmid related to Bacillus anthracis pXO1.</title>
        <authorList>
            <person name="Rasko D.A."/>
            <person name="Ravel J."/>
            <person name="Oekstad O.A."/>
            <person name="Helgason E."/>
            <person name="Cer R.Z."/>
            <person name="Jiang L."/>
            <person name="Shores K.A."/>
            <person name="Fouts D.E."/>
            <person name="Tourasse N.J."/>
            <person name="Angiuoli S.V."/>
            <person name="Kolonay J.F."/>
            <person name="Nelson W.C."/>
            <person name="Kolstoe A.-B."/>
            <person name="Fraser C.M."/>
            <person name="Read T.D."/>
        </authorList>
    </citation>
    <scope>NUCLEOTIDE SEQUENCE [LARGE SCALE GENOMIC DNA]</scope>
    <source>
        <strain>ATCC 10987 / NRS 248</strain>
    </source>
</reference>
<evidence type="ECO:0000255" key="1">
    <source>
        <dbReference type="HAMAP-Rule" id="MF_00361"/>
    </source>
</evidence>
<sequence>MKFTIMSKGDQSSDALASTMKEYLLDFGFIMDEQEPDIVISVGGDGTLLYAFHRYYNRLDETAFVGVHTGHLGFYADWLPTEVEKLVIAIAKTPFQVVEYPLLEVIIRYVNGSKESQYLAMNEATVKSAEGTLVTEVEIRGEYFETFRGDGLCISTPSGSTAYNKALGGAIIHPSIEAIQIAEMASINNRVFRTVGSPLVLPKHHTCVLKPTAGMNLQITVDHLTMVHQDVKSIQYRVANEKVRFVRFRPFPFWKRVRDSFVADK</sequence>
<gene>
    <name evidence="1" type="primary">nadK1</name>
    <name type="ordered locus">BCE_1321</name>
</gene>
<organism>
    <name type="scientific">Bacillus cereus (strain ATCC 10987 / NRS 248)</name>
    <dbReference type="NCBI Taxonomy" id="222523"/>
    <lineage>
        <taxon>Bacteria</taxon>
        <taxon>Bacillati</taxon>
        <taxon>Bacillota</taxon>
        <taxon>Bacilli</taxon>
        <taxon>Bacillales</taxon>
        <taxon>Bacillaceae</taxon>
        <taxon>Bacillus</taxon>
        <taxon>Bacillus cereus group</taxon>
    </lineage>
</organism>
<proteinExistence type="inferred from homology"/>
<name>NADK1_BACC1</name>
<feature type="chain" id="PRO_0000229599" description="NAD kinase 1">
    <location>
        <begin position="1"/>
        <end position="265"/>
    </location>
</feature>
<feature type="active site" description="Proton acceptor" evidence="1">
    <location>
        <position position="45"/>
    </location>
</feature>
<feature type="binding site" evidence="1">
    <location>
        <begin position="45"/>
        <end position="46"/>
    </location>
    <ligand>
        <name>NAD(+)</name>
        <dbReference type="ChEBI" id="CHEBI:57540"/>
    </ligand>
</feature>
<feature type="binding site" evidence="1">
    <location>
        <begin position="122"/>
        <end position="123"/>
    </location>
    <ligand>
        <name>NAD(+)</name>
        <dbReference type="ChEBI" id="CHEBI:57540"/>
    </ligand>
</feature>
<feature type="binding site" evidence="1">
    <location>
        <position position="148"/>
    </location>
    <ligand>
        <name>NAD(+)</name>
        <dbReference type="ChEBI" id="CHEBI:57540"/>
    </ligand>
</feature>
<feature type="binding site" evidence="1">
    <location>
        <position position="150"/>
    </location>
    <ligand>
        <name>NAD(+)</name>
        <dbReference type="ChEBI" id="CHEBI:57540"/>
    </ligand>
</feature>
<feature type="binding site" evidence="1">
    <location>
        <position position="185"/>
    </location>
    <ligand>
        <name>NAD(+)</name>
        <dbReference type="ChEBI" id="CHEBI:57540"/>
    </ligand>
</feature>
<keyword id="KW-0067">ATP-binding</keyword>
<keyword id="KW-0963">Cytoplasm</keyword>
<keyword id="KW-0418">Kinase</keyword>
<keyword id="KW-0520">NAD</keyword>
<keyword id="KW-0521">NADP</keyword>
<keyword id="KW-0547">Nucleotide-binding</keyword>
<keyword id="KW-0808">Transferase</keyword>